<feature type="chain" id="PRO_0000302875" description="Interactor of HORMAD1 protein 1">
    <location>
        <begin position="1"/>
        <end position="594"/>
    </location>
</feature>
<feature type="region of interest" description="Disordered" evidence="3">
    <location>
        <begin position="434"/>
        <end position="454"/>
    </location>
</feature>
<feature type="coiled-coil region" evidence="2">
    <location>
        <begin position="109"/>
        <end position="135"/>
    </location>
</feature>
<feature type="coiled-coil region" evidence="2">
    <location>
        <begin position="165"/>
        <end position="189"/>
    </location>
</feature>
<feature type="coiled-coil region" evidence="2">
    <location>
        <begin position="219"/>
        <end position="245"/>
    </location>
</feature>
<feature type="compositionally biased region" description="Basic and acidic residues" evidence="3">
    <location>
        <begin position="434"/>
        <end position="443"/>
    </location>
</feature>
<feature type="compositionally biased region" description="Basic residues" evidence="3">
    <location>
        <begin position="444"/>
        <end position="454"/>
    </location>
</feature>
<feature type="modified residue" description="Phosphoserine" evidence="1">
    <location>
        <position position="588"/>
    </location>
</feature>
<feature type="modified residue" description="Phosphoserine" evidence="1">
    <location>
        <position position="589"/>
    </location>
</feature>
<feature type="splice variant" id="VSP_027987" description="In isoform 2." evidence="6">
    <original>MNFNVWNIKEMLSIPSGSG</original>
    <variation>MARVDAKAKEAPRASEGCQHAVTSQR</variation>
    <location>
        <begin position="1"/>
        <end position="19"/>
    </location>
</feature>
<feature type="splice variant" id="VSP_027988" description="In isoform 2." evidence="6">
    <location>
        <begin position="91"/>
        <end position="117"/>
    </location>
</feature>
<feature type="splice variant" id="VSP_027989" description="In isoform 3." evidence="7">
    <original>ETLYNFVSNVRESILRLQTSVEKSEDHLSSRSQSILDSLETVAKTLQETIQAQNDLVFEAVQDKGNMEQAI</original>
    <variation>CRRLWKSLRTISVQEANLFWILWRLWPRHVSASCLRYQQRALVNDEHELSDPSLVSSGEVPHRVSDERMGI</variation>
    <location>
        <begin position="133"/>
        <end position="203"/>
    </location>
</feature>
<feature type="splice variant" id="VSP_027990" description="In isoform 3." evidence="7">
    <location>
        <begin position="204"/>
        <end position="594"/>
    </location>
</feature>
<feature type="sequence variant" id="VAR_035002" description="In dbSNP:rs13068038.">
    <original>D</original>
    <variation>E</variation>
    <location>
        <position position="440"/>
    </location>
</feature>
<accession>Q8IYA8</accession>
<accession>C9JJL0</accession>
<accession>Q05DG9</accession>
<accession>Q96LP7</accession>
<proteinExistence type="evidence at protein level"/>
<evidence type="ECO:0000250" key="1">
    <source>
        <dbReference type="UniProtKB" id="Q6PDM4"/>
    </source>
</evidence>
<evidence type="ECO:0000255" key="2"/>
<evidence type="ECO:0000256" key="3">
    <source>
        <dbReference type="SAM" id="MobiDB-lite"/>
    </source>
</evidence>
<evidence type="ECO:0000269" key="4">
    <source>
    </source>
</evidence>
<evidence type="ECO:0000269" key="5">
    <source>
    </source>
</evidence>
<evidence type="ECO:0000303" key="6">
    <source>
    </source>
</evidence>
<evidence type="ECO:0000303" key="7">
    <source>
    </source>
</evidence>
<evidence type="ECO:0000303" key="8">
    <source>
    </source>
</evidence>
<evidence type="ECO:0000305" key="9"/>
<evidence type="ECO:0000312" key="10">
    <source>
        <dbReference type="HGNC" id="HGNC:27945"/>
    </source>
</evidence>
<comment type="function">
    <text evidence="1">Required for DNA double-strand breaks (DSBs) formation in unsynapsed regions during meiotic recombination. Probably acts by forming a complex with MEI4 and REC114, which activates DSBs formation in unsynapsed regions, an essential step to ensure completion of synapsis. Not required for HORMAD1 functions in pairing-independent synaptonemal complex formation, ATR recruitment to unsynapsed axes, meiotic silencing of unsynapsed chromatin (MSUC) or meiotic surveillance.</text>
</comment>
<comment type="subunit">
    <text evidence="1 4 5">Part of the MCD recombinosome complex, at least composed of IHO1, REC114 and MEI4 (By similarity). Interacts with REC114 (PubMed:31704776). Interacts with MEI4 (By similarity). Interacts with HORMAD1 (PubMed:27723721). Interacts with ANKRD31 (By similarity).</text>
</comment>
<comment type="interaction">
    <interactant intactId="EBI-8638439">
        <id>Q8IYA8</id>
    </interactant>
    <interactant intactId="EBI-743598">
        <id>Q9NYB9</id>
        <label>ABI2</label>
    </interactant>
    <organismsDiffer>false</organismsDiffer>
    <experiments>6</experiments>
</comment>
<comment type="interaction">
    <interactant intactId="EBI-8638439">
        <id>Q8IYA8</id>
    </interactant>
    <interactant intactId="EBI-11096309">
        <id>Q9NYB9-2</id>
        <label>ABI2</label>
    </interactant>
    <organismsDiffer>false</organismsDiffer>
    <experiments>3</experiments>
</comment>
<comment type="interaction">
    <interactant intactId="EBI-8638439">
        <id>Q8IYA8</id>
    </interactant>
    <interactant intactId="EBI-742038">
        <id>Q9P2A4</id>
        <label>ABI3</label>
    </interactant>
    <organismsDiffer>false</organismsDiffer>
    <experiments>3</experiments>
</comment>
<comment type="interaction">
    <interactant intactId="EBI-8638439">
        <id>Q8IYA8</id>
    </interactant>
    <interactant intactId="EBI-12048761">
        <id>P58397-3</id>
        <label>ADAMTS12</label>
    </interactant>
    <organismsDiffer>false</organismsDiffer>
    <experiments>3</experiments>
</comment>
<comment type="interaction">
    <interactant intactId="EBI-8638439">
        <id>Q8IYA8</id>
    </interactant>
    <interactant intactId="EBI-8643161">
        <id>Q9NX04</id>
        <label>AIRIM</label>
    </interactant>
    <organismsDiffer>false</organismsDiffer>
    <experiments>6</experiments>
</comment>
<comment type="interaction">
    <interactant intactId="EBI-8638439">
        <id>Q8IYA8</id>
    </interactant>
    <interactant intactId="EBI-745213">
        <id>P29972</id>
        <label>AQP1</label>
    </interactant>
    <organismsDiffer>false</organismsDiffer>
    <experiments>3</experiments>
</comment>
<comment type="interaction">
    <interactant intactId="EBI-8638439">
        <id>Q8IYA8</id>
    </interactant>
    <interactant intactId="EBI-11954292">
        <id>Q86V38</id>
        <label>ATN1</label>
    </interactant>
    <organismsDiffer>false</organismsDiffer>
    <experiments>3</experiments>
</comment>
<comment type="interaction">
    <interactant intactId="EBI-8638439">
        <id>Q8IYA8</id>
    </interactant>
    <interactant intactId="EBI-12006120">
        <id>A0A087WZT3</id>
        <label>BOLA2-SMG1P6</label>
    </interactant>
    <organismsDiffer>false</organismsDiffer>
    <experiments>3</experiments>
</comment>
<comment type="interaction">
    <interactant intactId="EBI-8638439">
        <id>Q8IYA8</id>
    </interactant>
    <interactant intactId="EBI-751319">
        <id>Q9H257</id>
        <label>CARD9</label>
    </interactant>
    <organismsDiffer>false</organismsDiffer>
    <experiments>3</experiments>
</comment>
<comment type="interaction">
    <interactant intactId="EBI-8638439">
        <id>Q8IYA8</id>
    </interactant>
    <interactant intactId="EBI-11530605">
        <id>Q9H257-2</id>
        <label>CARD9</label>
    </interactant>
    <organismsDiffer>false</organismsDiffer>
    <experiments>3</experiments>
</comment>
<comment type="interaction">
    <interactant intactId="EBI-8638439">
        <id>Q8IYA8</id>
    </interactant>
    <interactant intactId="EBI-744556">
        <id>Q96HB5</id>
        <label>CCDC120</label>
    </interactant>
    <organismsDiffer>false</organismsDiffer>
    <experiments>3</experiments>
</comment>
<comment type="interaction">
    <interactant intactId="EBI-8638439">
        <id>Q8IYA8</id>
    </interactant>
    <interactant intactId="EBI-10961624">
        <id>Q2TAC2-2</id>
        <label>CCDC57</label>
    </interactant>
    <organismsDiffer>false</organismsDiffer>
    <experiments>3</experiments>
</comment>
<comment type="interaction">
    <interactant intactId="EBI-8638439">
        <id>Q8IYA8</id>
    </interactant>
    <interactant intactId="EBI-396137">
        <id>Q9UJX2</id>
        <label>CDC23</label>
    </interactant>
    <organismsDiffer>false</organismsDiffer>
    <experiments>6</experiments>
</comment>
<comment type="interaction">
    <interactant intactId="EBI-8638439">
        <id>Q8IYA8</id>
    </interactant>
    <interactant intactId="EBI-749051">
        <id>Q8IYR0</id>
        <label>CFAP206</label>
    </interactant>
    <organismsDiffer>false</organismsDiffer>
    <experiments>3</experiments>
</comment>
<comment type="interaction">
    <interactant intactId="EBI-8638439">
        <id>Q8IYA8</id>
    </interactant>
    <interactant intactId="EBI-1053725">
        <id>P10606</id>
        <label>COX5B</label>
    </interactant>
    <organismsDiffer>false</organismsDiffer>
    <experiments>4</experiments>
</comment>
<comment type="interaction">
    <interactant intactId="EBI-8638439">
        <id>Q8IYA8</id>
    </interactant>
    <interactant intactId="EBI-349105">
        <id>P63167</id>
        <label>DYNLL1</label>
    </interactant>
    <organismsDiffer>false</organismsDiffer>
    <experiments>6</experiments>
</comment>
<comment type="interaction">
    <interactant intactId="EBI-8638439">
        <id>Q8IYA8</id>
    </interactant>
    <interactant intactId="EBI-742371">
        <id>Q96FJ2</id>
        <label>DYNLL2</label>
    </interactant>
    <organismsDiffer>false</organismsDiffer>
    <experiments>3</experiments>
</comment>
<comment type="interaction">
    <interactant intactId="EBI-8638439">
        <id>Q8IYA8</id>
    </interactant>
    <interactant intactId="EBI-743105">
        <id>Q5JVL4</id>
        <label>EFHC1</label>
    </interactant>
    <organismsDiffer>false</organismsDiffer>
    <experiments>3</experiments>
</comment>
<comment type="interaction">
    <interactant intactId="EBI-8638439">
        <id>Q8IYA8</id>
    </interactant>
    <interactant intactId="EBI-742102">
        <id>Q8IYI6</id>
        <label>EXOC8</label>
    </interactant>
    <organismsDiffer>false</organismsDiffer>
    <experiments>3</experiments>
</comment>
<comment type="interaction">
    <interactant intactId="EBI-8638439">
        <id>Q8IYA8</id>
    </interactant>
    <interactant intactId="EBI-744506">
        <id>Q86V42</id>
        <label>FAM124A</label>
    </interactant>
    <organismsDiffer>false</organismsDiffer>
    <experiments>3</experiments>
</comment>
<comment type="interaction">
    <interactant intactId="EBI-8638439">
        <id>Q8IYA8</id>
    </interactant>
    <interactant intactId="EBI-11986315">
        <id>Q9H5Z6-2</id>
        <label>FAM124B</label>
    </interactant>
    <organismsDiffer>false</organismsDiffer>
    <experiments>3</experiments>
</comment>
<comment type="interaction">
    <interactant intactId="EBI-8638439">
        <id>Q8IYA8</id>
    </interactant>
    <interactant intactId="EBI-2339898">
        <id>Q9NW38</id>
        <label>FANCL</label>
    </interactant>
    <organismsDiffer>false</organismsDiffer>
    <experiments>3</experiments>
</comment>
<comment type="interaction">
    <interactant intactId="EBI-8638439">
        <id>Q8IYA8</id>
    </interactant>
    <interactant intactId="EBI-495538">
        <id>P48023</id>
        <label>FASLG</label>
    </interactant>
    <organismsDiffer>false</organismsDiffer>
    <experiments>3</experiments>
</comment>
<comment type="interaction">
    <interactant intactId="EBI-8638439">
        <id>Q8IYA8</id>
    </interactant>
    <interactant intactId="EBI-741101">
        <id>Q13643</id>
        <label>FHL3</label>
    </interactant>
    <organismsDiffer>false</organismsDiffer>
    <experiments>4</experiments>
</comment>
<comment type="interaction">
    <interactant intactId="EBI-8638439">
        <id>Q8IYA8</id>
    </interactant>
    <interactant intactId="EBI-744771">
        <id>O75344</id>
        <label>FKBP6</label>
    </interactant>
    <organismsDiffer>false</organismsDiffer>
    <experiments>8</experiments>
</comment>
<comment type="interaction">
    <interactant intactId="EBI-8638439">
        <id>Q8IYA8</id>
    </interactant>
    <interactant intactId="EBI-744104">
        <id>P55040</id>
        <label>GEM</label>
    </interactant>
    <organismsDiffer>false</organismsDiffer>
    <experiments>3</experiments>
</comment>
<comment type="interaction">
    <interactant intactId="EBI-8638439">
        <id>Q8IYA8</id>
    </interactant>
    <interactant intactId="EBI-748515">
        <id>Q8IVS8</id>
        <label>GLYCTK</label>
    </interactant>
    <organismsDiffer>false</organismsDiffer>
    <experiments>3</experiments>
</comment>
<comment type="interaction">
    <interactant intactId="EBI-8638439">
        <id>Q8IYA8</id>
    </interactant>
    <interactant intactId="EBI-740553">
        <id>P13807</id>
        <label>GYS1</label>
    </interactant>
    <organismsDiffer>false</organismsDiffer>
    <experiments>6</experiments>
</comment>
<comment type="interaction">
    <interactant intactId="EBI-8638439">
        <id>Q8IYA8</id>
    </interactant>
    <interactant intactId="EBI-5460660">
        <id>Q96MH2</id>
        <label>HEXIM2</label>
    </interactant>
    <organismsDiffer>false</organismsDiffer>
    <experiments>3</experiments>
</comment>
<comment type="interaction">
    <interactant intactId="EBI-8638439">
        <id>Q8IYA8</id>
    </interactant>
    <interactant intactId="EBI-10220600">
        <id>Q8NA54</id>
        <label>IQUB</label>
    </interactant>
    <organismsDiffer>false</organismsDiffer>
    <experiments>4</experiments>
</comment>
<comment type="interaction">
    <interactant intactId="EBI-8638439">
        <id>Q8IYA8</id>
    </interactant>
    <interactant intactId="EBI-2556193">
        <id>Q63ZY3</id>
        <label>KANK2</label>
    </interactant>
    <organismsDiffer>false</organismsDiffer>
    <experiments>6</experiments>
</comment>
<comment type="interaction">
    <interactant intactId="EBI-8638439">
        <id>Q8IYA8</id>
    </interactant>
    <interactant intactId="EBI-8472129">
        <id>Q9HAQ2</id>
        <label>KIF9</label>
    </interactant>
    <organismsDiffer>false</organismsDiffer>
    <experiments>3</experiments>
</comment>
<comment type="interaction">
    <interactant intactId="EBI-8638439">
        <id>Q8IYA8</id>
    </interactant>
    <interactant intactId="EBI-14069005">
        <id>Q9BVG8-5</id>
        <label>KIFC3</label>
    </interactant>
    <organismsDiffer>false</organismsDiffer>
    <experiments>3</experiments>
</comment>
<comment type="interaction">
    <interactant intactId="EBI-8638439">
        <id>Q8IYA8</id>
    </interactant>
    <interactant intactId="EBI-1643885">
        <id>Q6P597</id>
        <label>KLC3</label>
    </interactant>
    <organismsDiffer>false</organismsDiffer>
    <experiments>3</experiments>
</comment>
<comment type="interaction">
    <interactant intactId="EBI-8638439">
        <id>Q8IYA8</id>
    </interactant>
    <interactant intactId="EBI-2691832">
        <id>Q9NVR0</id>
        <label>KLHL11</label>
    </interactant>
    <organismsDiffer>false</organismsDiffer>
    <experiments>3</experiments>
</comment>
<comment type="interaction">
    <interactant intactId="EBI-8638439">
        <id>Q8IYA8</id>
    </interactant>
    <interactant intactId="EBI-2432309">
        <id>Q92876</id>
        <label>KLK6</label>
    </interactant>
    <organismsDiffer>false</organismsDiffer>
    <experiments>3</experiments>
</comment>
<comment type="interaction">
    <interactant intactId="EBI-8638439">
        <id>Q8IYA8</id>
    </interactant>
    <interactant intactId="EBI-739696">
        <id>P25791</id>
        <label>LMO2</label>
    </interactant>
    <organismsDiffer>false</organismsDiffer>
    <experiments>3</experiments>
</comment>
<comment type="interaction">
    <interactant intactId="EBI-8638439">
        <id>Q8IYA8</id>
    </interactant>
    <interactant intactId="EBI-11959475">
        <id>P25791-3</id>
        <label>LMO2</label>
    </interactant>
    <organismsDiffer>false</organismsDiffer>
    <experiments>3</experiments>
</comment>
<comment type="interaction">
    <interactant intactId="EBI-8638439">
        <id>Q8IYA8</id>
    </interactant>
    <interactant intactId="EBI-739832">
        <id>Q8TBB1</id>
        <label>LNX1</label>
    </interactant>
    <organismsDiffer>false</organismsDiffer>
    <experiments>3</experiments>
</comment>
<comment type="interaction">
    <interactant intactId="EBI-8638439">
        <id>Q8IYA8</id>
    </interactant>
    <interactant intactId="EBI-2341787">
        <id>Q17RB8</id>
        <label>LONRF1</label>
    </interactant>
    <organismsDiffer>false</organismsDiffer>
    <experiments>6</experiments>
</comment>
<comment type="interaction">
    <interactant intactId="EBI-8638439">
        <id>Q8IYA8</id>
    </interactant>
    <interactant intactId="EBI-751857">
        <id>O15481</id>
        <label>MAGEB4</label>
    </interactant>
    <organismsDiffer>false</organismsDiffer>
    <experiments>3</experiments>
</comment>
<comment type="interaction">
    <interactant intactId="EBI-8638439">
        <id>Q8IYA8</id>
    </interactant>
    <interactant intactId="EBI-746778">
        <id>Q96A72</id>
        <label>MAGOHB</label>
    </interactant>
    <organismsDiffer>false</organismsDiffer>
    <experiments>3</experiments>
</comment>
<comment type="interaction">
    <interactant intactId="EBI-8638439">
        <id>Q8IYA8</id>
    </interactant>
    <interactant intactId="EBI-713568">
        <id>P45984</id>
        <label>MAPK9</label>
    </interactant>
    <organismsDiffer>false</organismsDiffer>
    <experiments>3</experiments>
</comment>
<comment type="interaction">
    <interactant intactId="EBI-8638439">
        <id>Q8IYA8</id>
    </interactant>
    <interactant intactId="EBI-10172526">
        <id>Q9UJV3-2</id>
        <label>MID2</label>
    </interactant>
    <organismsDiffer>false</organismsDiffer>
    <experiments>3</experiments>
</comment>
<comment type="interaction">
    <interactant intactId="EBI-8638439">
        <id>Q8IYA8</id>
    </interactant>
    <interactant intactId="EBI-748896">
        <id>Q96HT8</id>
        <label>MRFAP1L1</label>
    </interactant>
    <organismsDiffer>false</organismsDiffer>
    <experiments>7</experiments>
</comment>
<comment type="interaction">
    <interactant intactId="EBI-8638439">
        <id>Q8IYA8</id>
    </interactant>
    <interactant intactId="EBI-7950783">
        <id>Q96JP2</id>
        <label>MYO15B</label>
    </interactant>
    <organismsDiffer>false</organismsDiffer>
    <experiments>3</experiments>
</comment>
<comment type="interaction">
    <interactant intactId="EBI-8638439">
        <id>Q8IYA8</id>
    </interactant>
    <interactant intactId="EBI-740364">
        <id>Q9HC98</id>
        <label>NEK6</label>
    </interactant>
    <organismsDiffer>false</organismsDiffer>
    <experiments>3</experiments>
</comment>
<comment type="interaction">
    <interactant intactId="EBI-8638439">
        <id>Q8IYA8</id>
    </interactant>
    <interactant intactId="EBI-11750983">
        <id>Q9HC98-4</id>
        <label>NEK6</label>
    </interactant>
    <organismsDiffer>false</organismsDiffer>
    <experiments>3</experiments>
</comment>
<comment type="interaction">
    <interactant intactId="EBI-8638439">
        <id>Q8IYA8</id>
    </interactant>
    <interactant intactId="EBI-10271199">
        <id>Q8NI38</id>
        <label>NFKBID</label>
    </interactant>
    <organismsDiffer>false</organismsDiffer>
    <experiments>3</experiments>
</comment>
<comment type="interaction">
    <interactant intactId="EBI-8638439">
        <id>Q8IYA8</id>
    </interactant>
    <interactant intactId="EBI-10311409">
        <id>Q9NPG2</id>
        <label>NGB</label>
    </interactant>
    <organismsDiffer>false</organismsDiffer>
    <experiments>6</experiments>
</comment>
<comment type="interaction">
    <interactant intactId="EBI-8638439">
        <id>Q8IYA8</id>
    </interactant>
    <interactant intactId="EBI-79165">
        <id>Q9NRD5</id>
        <label>PICK1</label>
    </interactant>
    <organismsDiffer>false</organismsDiffer>
    <experiments>3</experiments>
</comment>
<comment type="interaction">
    <interactant intactId="EBI-8638439">
        <id>Q8IYA8</id>
    </interactant>
    <interactant intactId="EBI-1055079">
        <id>O15160</id>
        <label>POLR1C</label>
    </interactant>
    <organismsDiffer>false</organismsDiffer>
    <experiments>3</experiments>
</comment>
<comment type="interaction">
    <interactant intactId="EBI-8638439">
        <id>Q8IYA8</id>
    </interactant>
    <interactant intactId="EBI-1053424">
        <id>O43741</id>
        <label>PRKAB2</label>
    </interactant>
    <organismsDiffer>false</organismsDiffer>
    <experiments>6</experiments>
</comment>
<comment type="interaction">
    <interactant intactId="EBI-8638439">
        <id>Q8IYA8</id>
    </interactant>
    <interactant intactId="EBI-11959565">
        <id>Q9NV39</id>
        <label>PRR34</label>
    </interactant>
    <organismsDiffer>false</organismsDiffer>
    <experiments>3</experiments>
</comment>
<comment type="interaction">
    <interactant intactId="EBI-8638439">
        <id>Q8IYA8</id>
    </interactant>
    <interactant intactId="EBI-14093916">
        <id>Q9UJ41-4</id>
        <label>RABGEF1</label>
    </interactant>
    <organismsDiffer>false</organismsDiffer>
    <experiments>3</experiments>
</comment>
<comment type="interaction">
    <interactant intactId="EBI-8638439">
        <id>Q8IYA8</id>
    </interactant>
    <interactant intactId="EBI-1055693">
        <id>O75771</id>
        <label>RAD51D</label>
    </interactant>
    <organismsDiffer>false</organismsDiffer>
    <experiments>6</experiments>
</comment>
<comment type="interaction">
    <interactant intactId="EBI-8638439">
        <id>Q8IYA8</id>
    </interactant>
    <interactant intactId="EBI-2367123">
        <id>O94955</id>
        <label>RHOBTB3</label>
    </interactant>
    <organismsDiffer>false</organismsDiffer>
    <experiments>3</experiments>
</comment>
<comment type="interaction">
    <interactant intactId="EBI-8638439">
        <id>Q8IYA8</id>
    </interactant>
    <interactant intactId="EBI-11984663">
        <id>Q06455-2</id>
        <label>RUNX1T1</label>
    </interactant>
    <organismsDiffer>false</organismsDiffer>
    <experiments>3</experiments>
</comment>
<comment type="interaction">
    <interactant intactId="EBI-8638439">
        <id>Q8IYA8</id>
    </interactant>
    <interactant intactId="EBI-10224192">
        <id>Q06455-4</id>
        <label>RUNX1T1</label>
    </interactant>
    <organismsDiffer>false</organismsDiffer>
    <experiments>3</experiments>
</comment>
<comment type="interaction">
    <interactant intactId="EBI-8638439">
        <id>Q8IYA8</id>
    </interactant>
    <interactant intactId="EBI-727004">
        <id>O00560</id>
        <label>SDCBP</label>
    </interactant>
    <organismsDiffer>false</organismsDiffer>
    <experiments>3</experiments>
</comment>
<comment type="interaction">
    <interactant intactId="EBI-8638439">
        <id>Q8IYA8</id>
    </interactant>
    <interactant intactId="EBI-618295">
        <id>O00506</id>
        <label>STK25</label>
    </interactant>
    <organismsDiffer>false</organismsDiffer>
    <experiments>3</experiments>
</comment>
<comment type="interaction">
    <interactant intactId="EBI-8638439">
        <id>Q8IYA8</id>
    </interactant>
    <interactant intactId="EBI-2820256">
        <id>Q14142</id>
        <label>TRIM14</label>
    </interactant>
    <organismsDiffer>false</organismsDiffer>
    <experiments>3</experiments>
</comment>
<comment type="interaction">
    <interactant intactId="EBI-8638439">
        <id>Q8IYA8</id>
    </interactant>
    <interactant intactId="EBI-5235829">
        <id>Q8IWZ5</id>
        <label>TRIM42</label>
    </interactant>
    <organismsDiffer>false</organismsDiffer>
    <experiments>3</experiments>
</comment>
<comment type="interaction">
    <interactant intactId="EBI-8638439">
        <id>Q8IYA8</id>
    </interactant>
    <interactant intactId="EBI-948354">
        <id>Q6DKK2</id>
        <label>TTC19</label>
    </interactant>
    <organismsDiffer>false</organismsDiffer>
    <experiments>6</experiments>
</comment>
<comment type="interaction">
    <interactant intactId="EBI-8638439">
        <id>Q8IYA8</id>
    </interactant>
    <interactant intactId="EBI-743272">
        <id>O75604</id>
        <label>USP2</label>
    </interactant>
    <organismsDiffer>false</organismsDiffer>
    <experiments>3</experiments>
</comment>
<comment type="interaction">
    <interactant intactId="EBI-8638439">
        <id>Q8IYA8</id>
    </interactant>
    <interactant intactId="EBI-2511991">
        <id>Q9Y2K6</id>
        <label>USP20</label>
    </interactant>
    <organismsDiffer>false</organismsDiffer>
    <experiments>6</experiments>
</comment>
<comment type="interaction">
    <interactant intactId="EBI-8638439">
        <id>Q8IYA8</id>
    </interactant>
    <interactant intactId="EBI-1965777">
        <id>Q9BRR0</id>
        <label>ZKSCAN3</label>
    </interactant>
    <organismsDiffer>false</organismsDiffer>
    <experiments>3</experiments>
</comment>
<comment type="interaction">
    <interactant intactId="EBI-8638439">
        <id>Q8IYA8</id>
    </interactant>
    <interactant intactId="EBI-740727">
        <id>Q8TAU3</id>
        <label>ZNF417</label>
    </interactant>
    <organismsDiffer>false</organismsDiffer>
    <experiments>3</experiments>
</comment>
<comment type="interaction">
    <interactant intactId="EBI-8638439">
        <id>Q8IYA8</id>
    </interactant>
    <interactant intactId="EBI-16429014">
        <id>A0A0S2Z5X4</id>
        <label>ZNF688</label>
    </interactant>
    <organismsDiffer>false</organismsDiffer>
    <experiments>3</experiments>
</comment>
<comment type="interaction">
    <interactant intactId="EBI-8638439">
        <id>Q8IYA8</id>
    </interactant>
    <interactant intactId="EBI-10249899">
        <id>Q9H614</id>
    </interactant>
    <organismsDiffer>false</organismsDiffer>
    <experiments>3</experiments>
</comment>
<comment type="subcellular location">
    <subcellularLocation>
        <location evidence="1">Chromosome</location>
    </subcellularLocation>
    <text evidence="1">Specifically localizes to unsynapsed chromosomal regions during meiosis.</text>
</comment>
<comment type="alternative products">
    <event type="alternative splicing"/>
    <isoform>
        <id>Q8IYA8-1</id>
        <name>1</name>
        <sequence type="displayed"/>
    </isoform>
    <isoform>
        <id>Q8IYA8-2</id>
        <name>2</name>
        <sequence type="described" ref="VSP_027987 VSP_027988"/>
    </isoform>
    <isoform>
        <id>Q8IYA8-3</id>
        <name>3</name>
        <sequence type="described" ref="VSP_027989 VSP_027990"/>
    </isoform>
</comment>
<comment type="sequence caution" evidence="9">
    <conflict type="erroneous initiation">
        <sequence resource="EMBL-CDS" id="AAH36202"/>
    </conflict>
    <text>Truncated N-terminus.</text>
</comment>
<dbReference type="EMBL" id="AC121247">
    <property type="status" value="NOT_ANNOTATED_CDS"/>
    <property type="molecule type" value="Genomic_DNA"/>
</dbReference>
<dbReference type="EMBL" id="AC135506">
    <property type="status" value="NOT_ANNOTATED_CDS"/>
    <property type="molecule type" value="Genomic_DNA"/>
</dbReference>
<dbReference type="EMBL" id="BC015057">
    <property type="status" value="NOT_ANNOTATED_CDS"/>
    <property type="molecule type" value="mRNA"/>
</dbReference>
<dbReference type="EMBL" id="BC036202">
    <property type="protein sequence ID" value="AAH36202.1"/>
    <property type="status" value="ALT_INIT"/>
    <property type="molecule type" value="mRNA"/>
</dbReference>
<dbReference type="EMBL" id="AK058049">
    <property type="protein sequence ID" value="BAB71640.1"/>
    <property type="molecule type" value="mRNA"/>
</dbReference>
<dbReference type="CCDS" id="CCDS33755.2">
    <molecule id="Q8IYA8-1"/>
</dbReference>
<dbReference type="RefSeq" id="NP_001128669.1">
    <molecule id="Q8IYA8-1"/>
    <property type="nucleotide sequence ID" value="NM_001135197.2"/>
</dbReference>
<dbReference type="RefSeq" id="NP_835467.2">
    <molecule id="Q8IYA8-1"/>
    <property type="nucleotide sequence ID" value="NM_178173.4"/>
</dbReference>
<dbReference type="RefSeq" id="XP_006713187.1">
    <molecule id="Q8IYA8-1"/>
    <property type="nucleotide sequence ID" value="XM_006713124.4"/>
</dbReference>
<dbReference type="RefSeq" id="XP_011531974.1">
    <molecule id="Q8IYA8-1"/>
    <property type="nucleotide sequence ID" value="XM_011533672.3"/>
</dbReference>
<dbReference type="RefSeq" id="XP_011531975.1">
    <molecule id="Q8IYA8-1"/>
    <property type="nucleotide sequence ID" value="XM_011533673.3"/>
</dbReference>
<dbReference type="RefSeq" id="XP_047304024.1">
    <molecule id="Q8IYA8-1"/>
    <property type="nucleotide sequence ID" value="XM_047448068.1"/>
</dbReference>
<dbReference type="RefSeq" id="XP_054202392.1">
    <molecule id="Q8IYA8-1"/>
    <property type="nucleotide sequence ID" value="XM_054346417.1"/>
</dbReference>
<dbReference type="RefSeq" id="XP_054202393.1">
    <molecule id="Q8IYA8-1"/>
    <property type="nucleotide sequence ID" value="XM_054346418.1"/>
</dbReference>
<dbReference type="RefSeq" id="XP_054202394.1">
    <molecule id="Q8IYA8-1"/>
    <property type="nucleotide sequence ID" value="XM_054346419.1"/>
</dbReference>
<dbReference type="RefSeq" id="XP_054202395.1">
    <molecule id="Q8IYA8-1"/>
    <property type="nucleotide sequence ID" value="XM_054346420.1"/>
</dbReference>
<dbReference type="SMR" id="Q8IYA8"/>
<dbReference type="BioGRID" id="130947">
    <property type="interactions" value="99"/>
</dbReference>
<dbReference type="ComplexPortal" id="CPX-2358">
    <property type="entry name" value="CCDC36-MEI4-REC114 meiotic recombination initiation complex"/>
</dbReference>
<dbReference type="FunCoup" id="Q8IYA8">
    <property type="interactions" value="42"/>
</dbReference>
<dbReference type="IntAct" id="Q8IYA8">
    <property type="interactions" value="83"/>
</dbReference>
<dbReference type="MINT" id="Q8IYA8"/>
<dbReference type="STRING" id="9606.ENSP00000391788"/>
<dbReference type="GlyCosmos" id="Q8IYA8">
    <property type="glycosylation" value="2 sites, 1 glycan"/>
</dbReference>
<dbReference type="GlyGen" id="Q8IYA8">
    <property type="glycosylation" value="2 sites, 1 O-linked glycan (2 sites)"/>
</dbReference>
<dbReference type="iPTMnet" id="Q8IYA8"/>
<dbReference type="PhosphoSitePlus" id="Q8IYA8"/>
<dbReference type="BioMuta" id="CCDC36"/>
<dbReference type="DMDM" id="313104087"/>
<dbReference type="MassIVE" id="Q8IYA8"/>
<dbReference type="PaxDb" id="9606-ENSP00000391788"/>
<dbReference type="PeptideAtlas" id="Q8IYA8"/>
<dbReference type="ProteomicsDB" id="71136">
    <molecule id="Q8IYA8-2"/>
</dbReference>
<dbReference type="Antibodypedia" id="48985">
    <property type="antibodies" value="191 antibodies from 22 providers"/>
</dbReference>
<dbReference type="DNASU" id="339834"/>
<dbReference type="Ensembl" id="ENST00000296449.9">
    <molecule id="Q8IYA8-1"/>
    <property type="protein sequence ID" value="ENSP00000296449.5"/>
    <property type="gene ID" value="ENSG00000173421.17"/>
</dbReference>
<dbReference type="Ensembl" id="ENST00000366429.2">
    <molecule id="Q8IYA8-3"/>
    <property type="protein sequence ID" value="ENSP00000403700.1"/>
    <property type="gene ID" value="ENSG00000173421.17"/>
</dbReference>
<dbReference type="Ensembl" id="ENST00000438782.5">
    <molecule id="Q8IYA8-1"/>
    <property type="protein sequence ID" value="ENSP00000391788.1"/>
    <property type="gene ID" value="ENSG00000173421.17"/>
</dbReference>
<dbReference type="Ensembl" id="ENST00000452691.7">
    <molecule id="Q8IYA8-1"/>
    <property type="protein sequence ID" value="ENSP00000407837.2"/>
    <property type="gene ID" value="ENSG00000173421.17"/>
</dbReference>
<dbReference type="GeneID" id="339834"/>
<dbReference type="KEGG" id="hsa:339834"/>
<dbReference type="MANE-Select" id="ENST00000452691.7">
    <property type="protein sequence ID" value="ENSP00000407837.2"/>
    <property type="RefSeq nucleotide sequence ID" value="NM_001135197.2"/>
    <property type="RefSeq protein sequence ID" value="NP_001128669.1"/>
</dbReference>
<dbReference type="UCSC" id="uc003cwk.3">
    <molecule id="Q8IYA8-1"/>
    <property type="organism name" value="human"/>
</dbReference>
<dbReference type="AGR" id="HGNC:27945"/>
<dbReference type="CTD" id="339834"/>
<dbReference type="DisGeNET" id="339834"/>
<dbReference type="GeneCards" id="IHO1"/>
<dbReference type="HGNC" id="HGNC:27945">
    <property type="gene designation" value="IHO1"/>
</dbReference>
<dbReference type="HPA" id="ENSG00000173421">
    <property type="expression patterns" value="Tissue enriched (testis)"/>
</dbReference>
<dbReference type="MIM" id="619190">
    <property type="type" value="gene"/>
</dbReference>
<dbReference type="neXtProt" id="NX_Q8IYA8"/>
<dbReference type="OpenTargets" id="ENSG00000173421"/>
<dbReference type="VEuPathDB" id="HostDB:ENSG00000173421"/>
<dbReference type="eggNOG" id="ENOG502S0PR">
    <property type="taxonomic scope" value="Eukaryota"/>
</dbReference>
<dbReference type="GeneTree" id="ENSGT00390000012418"/>
<dbReference type="HOGENOM" id="CLU_034910_0_0_1"/>
<dbReference type="InParanoid" id="Q8IYA8"/>
<dbReference type="OMA" id="PGHVKDS"/>
<dbReference type="OrthoDB" id="10066605at2759"/>
<dbReference type="PAN-GO" id="Q8IYA8">
    <property type="GO annotations" value="3 GO annotations based on evolutionary models"/>
</dbReference>
<dbReference type="PhylomeDB" id="Q8IYA8"/>
<dbReference type="TreeFam" id="TF337135"/>
<dbReference type="PathwayCommons" id="Q8IYA8"/>
<dbReference type="SignaLink" id="Q8IYA8"/>
<dbReference type="SIGNOR" id="Q8IYA8"/>
<dbReference type="BioGRID-ORCS" id="339834">
    <property type="hits" value="39 hits in 1148 CRISPR screens"/>
</dbReference>
<dbReference type="ChiTaRS" id="CCDC36">
    <property type="organism name" value="human"/>
</dbReference>
<dbReference type="GenomeRNAi" id="339834"/>
<dbReference type="Pharos" id="Q8IYA8">
    <property type="development level" value="Tbio"/>
</dbReference>
<dbReference type="PRO" id="PR:Q8IYA8"/>
<dbReference type="Proteomes" id="UP000005640">
    <property type="component" value="Chromosome 3"/>
</dbReference>
<dbReference type="RNAct" id="Q8IYA8">
    <property type="molecule type" value="protein"/>
</dbReference>
<dbReference type="Bgee" id="ENSG00000173421">
    <property type="expression patterns" value="Expressed in left testis and 106 other cell types or tissues"/>
</dbReference>
<dbReference type="GO" id="GO:0000794">
    <property type="term" value="C:condensed nuclear chromosome"/>
    <property type="evidence" value="ECO:0000250"/>
    <property type="project" value="UniProtKB"/>
</dbReference>
<dbReference type="GO" id="GO:0006310">
    <property type="term" value="P:DNA recombination"/>
    <property type="evidence" value="ECO:0007669"/>
    <property type="project" value="UniProtKB-KW"/>
</dbReference>
<dbReference type="GO" id="GO:0007129">
    <property type="term" value="P:homologous chromosome pairing at meiosis"/>
    <property type="evidence" value="ECO:0000250"/>
    <property type="project" value="UniProtKB"/>
</dbReference>
<dbReference type="GO" id="GO:0042138">
    <property type="term" value="P:meiotic DNA double-strand break formation"/>
    <property type="evidence" value="ECO:0000250"/>
    <property type="project" value="UniProtKB"/>
</dbReference>
<dbReference type="GO" id="GO:0048477">
    <property type="term" value="P:oogenesis"/>
    <property type="evidence" value="ECO:0000250"/>
    <property type="project" value="UniProtKB"/>
</dbReference>
<dbReference type="GO" id="GO:0060629">
    <property type="term" value="P:regulation of homologous chromosome segregation"/>
    <property type="evidence" value="ECO:0000250"/>
    <property type="project" value="UniProtKB"/>
</dbReference>
<dbReference type="GO" id="GO:0007283">
    <property type="term" value="P:spermatogenesis"/>
    <property type="evidence" value="ECO:0000250"/>
    <property type="project" value="UniProtKB"/>
</dbReference>
<dbReference type="InterPro" id="IPR031529">
    <property type="entry name" value="IHO1"/>
</dbReference>
<dbReference type="PANTHER" id="PTHR35662">
    <property type="entry name" value="INTERACTOR OF HORMAD1 PROTEIN 1"/>
    <property type="match status" value="1"/>
</dbReference>
<dbReference type="PANTHER" id="PTHR35662:SF1">
    <property type="entry name" value="INTERACTOR OF HORMAD1 PROTEIN 1"/>
    <property type="match status" value="1"/>
</dbReference>
<dbReference type="Pfam" id="PF15771">
    <property type="entry name" value="IHO1"/>
    <property type="match status" value="1"/>
</dbReference>
<sequence>MNFNVWNIKEMLSIPSGSGNKKSSNWNNNQNDYSSLSDSQFLFGSQFCPENSETLSAPLDFGAHLRHSKQSQQNYLEGEPSIFTKYQTKPQLFGGDIKDGGLFPPPLSVGKSKGLLEQFEEKKKRAKDKCDSETLYNFVSNVRESILRLQTSVEKSEDHLSSRSQSILDSLETVAKTLQETIQAQNDLVFEAVQDKGNMEQAILEMKKRFEARQGEFIEMKSNLKHLEVLVAQQSQEFQQLCEQLGQLNVPSVLAELKRLISVPPVKDSASQTSPPLAQSLNLTRQEKYTSEKPVLWQAQALPAAWNPGMGSLQPGEFDVWGEGAKNDDLQEEAALPAFGSHERNRHVKDKVVQTNCKNWAVTKTGAKNHGSSVPGHKIPSDRDLVSQGASQLTSLEINFSTSIKNACQKYQAQSMFLCDPREHLVIKQKDGTVEMRGKDKKQQPRKAHRAHRGRLIASKQKQIPIQTCKFNSKYQSPQPAISVPQSPFLGQQEPRAQPLHLQCPRSPRKPVCPILGGTVMPNKTVRAVQGRLLQLSRCSSQDNWLLSSSSQGDHQMSWFSDLNLGCSETPLCKEAGKNLLYDLGFDSSDDDGF</sequence>
<organism>
    <name type="scientific">Homo sapiens</name>
    <name type="common">Human</name>
    <dbReference type="NCBI Taxonomy" id="9606"/>
    <lineage>
        <taxon>Eukaryota</taxon>
        <taxon>Metazoa</taxon>
        <taxon>Chordata</taxon>
        <taxon>Craniata</taxon>
        <taxon>Vertebrata</taxon>
        <taxon>Euteleostomi</taxon>
        <taxon>Mammalia</taxon>
        <taxon>Eutheria</taxon>
        <taxon>Euarchontoglires</taxon>
        <taxon>Primates</taxon>
        <taxon>Haplorrhini</taxon>
        <taxon>Catarrhini</taxon>
        <taxon>Hominidae</taxon>
        <taxon>Homo</taxon>
    </lineage>
</organism>
<protein>
    <recommendedName>
        <fullName evidence="8">Interactor of HORMAD1 protein 1</fullName>
    </recommendedName>
    <alternativeName>
        <fullName>Cancer/testis antigen 74</fullName>
        <shortName>CT74</shortName>
    </alternativeName>
    <alternativeName>
        <fullName evidence="10">Coiled-coil domain-containing protein 36</fullName>
    </alternativeName>
</protein>
<keyword id="KW-0025">Alternative splicing</keyword>
<keyword id="KW-0158">Chromosome</keyword>
<keyword id="KW-0175">Coiled coil</keyword>
<keyword id="KW-0221">Differentiation</keyword>
<keyword id="KW-0233">DNA recombination</keyword>
<keyword id="KW-0469">Meiosis</keyword>
<keyword id="KW-0896">Oogenesis</keyword>
<keyword id="KW-0597">Phosphoprotein</keyword>
<keyword id="KW-1267">Proteomics identification</keyword>
<keyword id="KW-1185">Reference proteome</keyword>
<keyword id="KW-0744">Spermatogenesis</keyword>
<reference key="1">
    <citation type="journal article" date="2006" name="Nature">
        <title>The DNA sequence, annotation and analysis of human chromosome 3.</title>
        <authorList>
            <person name="Muzny D.M."/>
            <person name="Scherer S.E."/>
            <person name="Kaul R."/>
            <person name="Wang J."/>
            <person name="Yu J."/>
            <person name="Sudbrak R."/>
            <person name="Buhay C.J."/>
            <person name="Chen R."/>
            <person name="Cree A."/>
            <person name="Ding Y."/>
            <person name="Dugan-Rocha S."/>
            <person name="Gill R."/>
            <person name="Gunaratne P."/>
            <person name="Harris R.A."/>
            <person name="Hawes A.C."/>
            <person name="Hernandez J."/>
            <person name="Hodgson A.V."/>
            <person name="Hume J."/>
            <person name="Jackson A."/>
            <person name="Khan Z.M."/>
            <person name="Kovar-Smith C."/>
            <person name="Lewis L.R."/>
            <person name="Lozado R.J."/>
            <person name="Metzker M.L."/>
            <person name="Milosavljevic A."/>
            <person name="Miner G.R."/>
            <person name="Morgan M.B."/>
            <person name="Nazareth L.V."/>
            <person name="Scott G."/>
            <person name="Sodergren E."/>
            <person name="Song X.-Z."/>
            <person name="Steffen D."/>
            <person name="Wei S."/>
            <person name="Wheeler D.A."/>
            <person name="Wright M.W."/>
            <person name="Worley K.C."/>
            <person name="Yuan Y."/>
            <person name="Zhang Z."/>
            <person name="Adams C.Q."/>
            <person name="Ansari-Lari M.A."/>
            <person name="Ayele M."/>
            <person name="Brown M.J."/>
            <person name="Chen G."/>
            <person name="Chen Z."/>
            <person name="Clendenning J."/>
            <person name="Clerc-Blankenburg K.P."/>
            <person name="Chen R."/>
            <person name="Chen Z."/>
            <person name="Davis C."/>
            <person name="Delgado O."/>
            <person name="Dinh H.H."/>
            <person name="Dong W."/>
            <person name="Draper H."/>
            <person name="Ernst S."/>
            <person name="Fu G."/>
            <person name="Gonzalez-Garay M.L."/>
            <person name="Garcia D.K."/>
            <person name="Gillett W."/>
            <person name="Gu J."/>
            <person name="Hao B."/>
            <person name="Haugen E."/>
            <person name="Havlak P."/>
            <person name="He X."/>
            <person name="Hennig S."/>
            <person name="Hu S."/>
            <person name="Huang W."/>
            <person name="Jackson L.R."/>
            <person name="Jacob L.S."/>
            <person name="Kelly S.H."/>
            <person name="Kube M."/>
            <person name="Levy R."/>
            <person name="Li Z."/>
            <person name="Liu B."/>
            <person name="Liu J."/>
            <person name="Liu W."/>
            <person name="Lu J."/>
            <person name="Maheshwari M."/>
            <person name="Nguyen B.-V."/>
            <person name="Okwuonu G.O."/>
            <person name="Palmeiri A."/>
            <person name="Pasternak S."/>
            <person name="Perez L.M."/>
            <person name="Phelps K.A."/>
            <person name="Plopper F.J."/>
            <person name="Qiang B."/>
            <person name="Raymond C."/>
            <person name="Rodriguez R."/>
            <person name="Saenphimmachak C."/>
            <person name="Santibanez J."/>
            <person name="Shen H."/>
            <person name="Shen Y."/>
            <person name="Subramanian S."/>
            <person name="Tabor P.E."/>
            <person name="Verduzco D."/>
            <person name="Waldron L."/>
            <person name="Wang J."/>
            <person name="Wang J."/>
            <person name="Wang Q."/>
            <person name="Williams G.A."/>
            <person name="Wong G.K.-S."/>
            <person name="Yao Z."/>
            <person name="Zhang J."/>
            <person name="Zhang X."/>
            <person name="Zhao G."/>
            <person name="Zhou J."/>
            <person name="Zhou Y."/>
            <person name="Nelson D."/>
            <person name="Lehrach H."/>
            <person name="Reinhardt R."/>
            <person name="Naylor S.L."/>
            <person name="Yang H."/>
            <person name="Olson M."/>
            <person name="Weinstock G."/>
            <person name="Gibbs R.A."/>
        </authorList>
    </citation>
    <scope>NUCLEOTIDE SEQUENCE [LARGE SCALE GENOMIC DNA]</scope>
</reference>
<reference key="2">
    <citation type="journal article" date="2004" name="Genome Res.">
        <title>The status, quality, and expansion of the NIH full-length cDNA project: the Mammalian Gene Collection (MGC).</title>
        <authorList>
            <consortium name="The MGC Project Team"/>
        </authorList>
    </citation>
    <scope>NUCLEOTIDE SEQUENCE [LARGE SCALE MRNA] (ISOFORMS 1 AND 3)</scope>
    <source>
        <tissue>Testis</tissue>
    </source>
</reference>
<reference key="3">
    <citation type="journal article" date="2004" name="Nat. Genet.">
        <title>Complete sequencing and characterization of 21,243 full-length human cDNAs.</title>
        <authorList>
            <person name="Ota T."/>
            <person name="Suzuki Y."/>
            <person name="Nishikawa T."/>
            <person name="Otsuki T."/>
            <person name="Sugiyama T."/>
            <person name="Irie R."/>
            <person name="Wakamatsu A."/>
            <person name="Hayashi K."/>
            <person name="Sato H."/>
            <person name="Nagai K."/>
            <person name="Kimura K."/>
            <person name="Makita H."/>
            <person name="Sekine M."/>
            <person name="Obayashi M."/>
            <person name="Nishi T."/>
            <person name="Shibahara T."/>
            <person name="Tanaka T."/>
            <person name="Ishii S."/>
            <person name="Yamamoto J."/>
            <person name="Saito K."/>
            <person name="Kawai Y."/>
            <person name="Isono Y."/>
            <person name="Nakamura Y."/>
            <person name="Nagahari K."/>
            <person name="Murakami K."/>
            <person name="Yasuda T."/>
            <person name="Iwayanagi T."/>
            <person name="Wagatsuma M."/>
            <person name="Shiratori A."/>
            <person name="Sudo H."/>
            <person name="Hosoiri T."/>
            <person name="Kaku Y."/>
            <person name="Kodaira H."/>
            <person name="Kondo H."/>
            <person name="Sugawara M."/>
            <person name="Takahashi M."/>
            <person name="Kanda K."/>
            <person name="Yokoi T."/>
            <person name="Furuya T."/>
            <person name="Kikkawa E."/>
            <person name="Omura Y."/>
            <person name="Abe K."/>
            <person name="Kamihara K."/>
            <person name="Katsuta N."/>
            <person name="Sato K."/>
            <person name="Tanikawa M."/>
            <person name="Yamazaki M."/>
            <person name="Ninomiya K."/>
            <person name="Ishibashi T."/>
            <person name="Yamashita H."/>
            <person name="Murakawa K."/>
            <person name="Fujimori K."/>
            <person name="Tanai H."/>
            <person name="Kimata M."/>
            <person name="Watanabe M."/>
            <person name="Hiraoka S."/>
            <person name="Chiba Y."/>
            <person name="Ishida S."/>
            <person name="Ono Y."/>
            <person name="Takiguchi S."/>
            <person name="Watanabe S."/>
            <person name="Yosida M."/>
            <person name="Hotuta T."/>
            <person name="Kusano J."/>
            <person name="Kanehori K."/>
            <person name="Takahashi-Fujii A."/>
            <person name="Hara H."/>
            <person name="Tanase T.-O."/>
            <person name="Nomura Y."/>
            <person name="Togiya S."/>
            <person name="Komai F."/>
            <person name="Hara R."/>
            <person name="Takeuchi K."/>
            <person name="Arita M."/>
            <person name="Imose N."/>
            <person name="Musashino K."/>
            <person name="Yuuki H."/>
            <person name="Oshima A."/>
            <person name="Sasaki N."/>
            <person name="Aotsuka S."/>
            <person name="Yoshikawa Y."/>
            <person name="Matsunawa H."/>
            <person name="Ichihara T."/>
            <person name="Shiohata N."/>
            <person name="Sano S."/>
            <person name="Moriya S."/>
            <person name="Momiyama H."/>
            <person name="Satoh N."/>
            <person name="Takami S."/>
            <person name="Terashima Y."/>
            <person name="Suzuki O."/>
            <person name="Nakagawa S."/>
            <person name="Senoh A."/>
            <person name="Mizoguchi H."/>
            <person name="Goto Y."/>
            <person name="Shimizu F."/>
            <person name="Wakebe H."/>
            <person name="Hishigaki H."/>
            <person name="Watanabe T."/>
            <person name="Sugiyama A."/>
            <person name="Takemoto M."/>
            <person name="Kawakami B."/>
            <person name="Yamazaki M."/>
            <person name="Watanabe K."/>
            <person name="Kumagai A."/>
            <person name="Itakura S."/>
            <person name="Fukuzumi Y."/>
            <person name="Fujimori Y."/>
            <person name="Komiyama M."/>
            <person name="Tashiro H."/>
            <person name="Tanigami A."/>
            <person name="Fujiwara T."/>
            <person name="Ono T."/>
            <person name="Yamada K."/>
            <person name="Fujii Y."/>
            <person name="Ozaki K."/>
            <person name="Hirao M."/>
            <person name="Ohmori Y."/>
            <person name="Kawabata A."/>
            <person name="Hikiji T."/>
            <person name="Kobatake N."/>
            <person name="Inagaki H."/>
            <person name="Ikema Y."/>
            <person name="Okamoto S."/>
            <person name="Okitani R."/>
            <person name="Kawakami T."/>
            <person name="Noguchi S."/>
            <person name="Itoh T."/>
            <person name="Shigeta K."/>
            <person name="Senba T."/>
            <person name="Matsumura K."/>
            <person name="Nakajima Y."/>
            <person name="Mizuno T."/>
            <person name="Morinaga M."/>
            <person name="Sasaki M."/>
            <person name="Togashi T."/>
            <person name="Oyama M."/>
            <person name="Hata H."/>
            <person name="Watanabe M."/>
            <person name="Komatsu T."/>
            <person name="Mizushima-Sugano J."/>
            <person name="Satoh T."/>
            <person name="Shirai Y."/>
            <person name="Takahashi Y."/>
            <person name="Nakagawa K."/>
            <person name="Okumura K."/>
            <person name="Nagase T."/>
            <person name="Nomura N."/>
            <person name="Kikuchi H."/>
            <person name="Masuho Y."/>
            <person name="Yamashita R."/>
            <person name="Nakai K."/>
            <person name="Yada T."/>
            <person name="Nakamura Y."/>
            <person name="Ohara O."/>
            <person name="Isogai T."/>
            <person name="Sugano S."/>
        </authorList>
    </citation>
    <scope>NUCLEOTIDE SEQUENCE [LARGE SCALE MRNA] OF 1-408 (ISOFORM 2)</scope>
    <source>
        <tissue>Testis</tissue>
    </source>
</reference>
<reference key="4">
    <citation type="journal article" date="2016" name="Nat. Cell Biol.">
        <title>Meiotic DNA break formation requires the unsynapsed chromosome axis-binding protein IHO1 (CCDC36) in mice.</title>
        <authorList>
            <person name="Stanzione M."/>
            <person name="Baumann M."/>
            <person name="Papanikos F."/>
            <person name="Dereli I."/>
            <person name="Lange J."/>
            <person name="Ramlal A."/>
            <person name="Traenkner D."/>
            <person name="Shibuya H."/>
            <person name="de Massy B."/>
            <person name="Watanabe Y."/>
            <person name="Jasin M."/>
            <person name="Keeney S."/>
            <person name="Toth A."/>
        </authorList>
    </citation>
    <scope>INTERACTION WITH HORMAD1</scope>
</reference>
<reference key="5">
    <citation type="journal article" date="2020" name="J. Med. Genet.">
        <title>Homozygous mutations in REC114 cause female infertility characterised by multiple pronuclei formation and early embryonic arrest.</title>
        <authorList>
            <person name="Wang W."/>
            <person name="Dong J."/>
            <person name="Chen B."/>
            <person name="Du J."/>
            <person name="Kuang Y."/>
            <person name="Sun X."/>
            <person name="Fu J."/>
            <person name="Li B."/>
            <person name="Mu J."/>
            <person name="Zhang Z."/>
            <person name="Zhou Z."/>
            <person name="Lin Z."/>
            <person name="Wu L."/>
            <person name="Yan Z."/>
            <person name="Mao X."/>
            <person name="Li Q."/>
            <person name="He L."/>
            <person name="Wang L."/>
            <person name="Sang Q."/>
        </authorList>
    </citation>
    <scope>INTERACTION WITH REC114</scope>
</reference>
<gene>
    <name evidence="8 10" type="primary">IHO1</name>
    <name evidence="10" type="synonym">CCDC36</name>
</gene>
<name>IHO1_HUMAN</name>